<organism>
    <name type="scientific">Francisella tularensis subsp. holarctica (strain FTNF002-00 / FTA)</name>
    <dbReference type="NCBI Taxonomy" id="458234"/>
    <lineage>
        <taxon>Bacteria</taxon>
        <taxon>Pseudomonadati</taxon>
        <taxon>Pseudomonadota</taxon>
        <taxon>Gammaproteobacteria</taxon>
        <taxon>Thiotrichales</taxon>
        <taxon>Francisellaceae</taxon>
        <taxon>Francisella</taxon>
    </lineage>
</organism>
<gene>
    <name evidence="1" type="primary">rplF</name>
    <name type="ordered locus">FTA_0266</name>
</gene>
<name>RL6_FRATF</name>
<reference key="1">
    <citation type="journal article" date="2009" name="PLoS ONE">
        <title>Complete genome sequence of Francisella tularensis subspecies holarctica FTNF002-00.</title>
        <authorList>
            <person name="Barabote R.D."/>
            <person name="Xie G."/>
            <person name="Brettin T.S."/>
            <person name="Hinrichs S.H."/>
            <person name="Fey P.D."/>
            <person name="Jay J.J."/>
            <person name="Engle J.L."/>
            <person name="Godbole S.D."/>
            <person name="Noronha J.M."/>
            <person name="Scheuermann R.H."/>
            <person name="Zhou L.W."/>
            <person name="Lion C."/>
            <person name="Dempsey M.P."/>
        </authorList>
    </citation>
    <scope>NUCLEOTIDE SEQUENCE [LARGE SCALE GENOMIC DNA]</scope>
    <source>
        <strain>FTNF002-00 / FTA</strain>
    </source>
</reference>
<protein>
    <recommendedName>
        <fullName evidence="1">Large ribosomal subunit protein uL6</fullName>
    </recommendedName>
    <alternativeName>
        <fullName evidence="2">50S ribosomal protein L6</fullName>
    </alternativeName>
</protein>
<feature type="chain" id="PRO_1000055232" description="Large ribosomal subunit protein uL6">
    <location>
        <begin position="1"/>
        <end position="178"/>
    </location>
</feature>
<proteinExistence type="inferred from homology"/>
<dbReference type="EMBL" id="CP000803">
    <property type="protein sequence ID" value="ABU60743.1"/>
    <property type="molecule type" value="Genomic_DNA"/>
</dbReference>
<dbReference type="RefSeq" id="WP_003014357.1">
    <property type="nucleotide sequence ID" value="NC_009749.1"/>
</dbReference>
<dbReference type="SMR" id="A7N9U0"/>
<dbReference type="KEGG" id="fta:FTA_0266"/>
<dbReference type="HOGENOM" id="CLU_065464_1_2_6"/>
<dbReference type="GO" id="GO:0022625">
    <property type="term" value="C:cytosolic large ribosomal subunit"/>
    <property type="evidence" value="ECO:0007669"/>
    <property type="project" value="TreeGrafter"/>
</dbReference>
<dbReference type="GO" id="GO:0019843">
    <property type="term" value="F:rRNA binding"/>
    <property type="evidence" value="ECO:0007669"/>
    <property type="project" value="UniProtKB-UniRule"/>
</dbReference>
<dbReference type="GO" id="GO:0003735">
    <property type="term" value="F:structural constituent of ribosome"/>
    <property type="evidence" value="ECO:0007669"/>
    <property type="project" value="InterPro"/>
</dbReference>
<dbReference type="GO" id="GO:0002181">
    <property type="term" value="P:cytoplasmic translation"/>
    <property type="evidence" value="ECO:0007669"/>
    <property type="project" value="TreeGrafter"/>
</dbReference>
<dbReference type="FunFam" id="3.90.930.12:FF:000001">
    <property type="entry name" value="50S ribosomal protein L6"/>
    <property type="match status" value="1"/>
</dbReference>
<dbReference type="Gene3D" id="3.90.930.12">
    <property type="entry name" value="Ribosomal protein L6, alpha-beta domain"/>
    <property type="match status" value="2"/>
</dbReference>
<dbReference type="HAMAP" id="MF_01365_B">
    <property type="entry name" value="Ribosomal_uL6_B"/>
    <property type="match status" value="1"/>
</dbReference>
<dbReference type="InterPro" id="IPR000702">
    <property type="entry name" value="Ribosomal_uL6-like"/>
</dbReference>
<dbReference type="InterPro" id="IPR036789">
    <property type="entry name" value="Ribosomal_uL6-like_a/b-dom_sf"/>
</dbReference>
<dbReference type="InterPro" id="IPR020040">
    <property type="entry name" value="Ribosomal_uL6_a/b-dom"/>
</dbReference>
<dbReference type="InterPro" id="IPR019906">
    <property type="entry name" value="Ribosomal_uL6_bac-type"/>
</dbReference>
<dbReference type="InterPro" id="IPR002358">
    <property type="entry name" value="Ribosomal_uL6_CS"/>
</dbReference>
<dbReference type="NCBIfam" id="TIGR03654">
    <property type="entry name" value="L6_bact"/>
    <property type="match status" value="1"/>
</dbReference>
<dbReference type="PANTHER" id="PTHR11655">
    <property type="entry name" value="60S/50S RIBOSOMAL PROTEIN L6/L9"/>
    <property type="match status" value="1"/>
</dbReference>
<dbReference type="PANTHER" id="PTHR11655:SF14">
    <property type="entry name" value="LARGE RIBOSOMAL SUBUNIT PROTEIN UL6M"/>
    <property type="match status" value="1"/>
</dbReference>
<dbReference type="Pfam" id="PF00347">
    <property type="entry name" value="Ribosomal_L6"/>
    <property type="match status" value="2"/>
</dbReference>
<dbReference type="PIRSF" id="PIRSF002162">
    <property type="entry name" value="Ribosomal_L6"/>
    <property type="match status" value="1"/>
</dbReference>
<dbReference type="PRINTS" id="PR00059">
    <property type="entry name" value="RIBOSOMALL6"/>
</dbReference>
<dbReference type="SUPFAM" id="SSF56053">
    <property type="entry name" value="Ribosomal protein L6"/>
    <property type="match status" value="2"/>
</dbReference>
<dbReference type="PROSITE" id="PS00525">
    <property type="entry name" value="RIBOSOMAL_L6_1"/>
    <property type="match status" value="1"/>
</dbReference>
<keyword id="KW-0687">Ribonucleoprotein</keyword>
<keyword id="KW-0689">Ribosomal protein</keyword>
<keyword id="KW-0694">RNA-binding</keyword>
<keyword id="KW-0699">rRNA-binding</keyword>
<accession>A7N9U0</accession>
<evidence type="ECO:0000255" key="1">
    <source>
        <dbReference type="HAMAP-Rule" id="MF_01365"/>
    </source>
</evidence>
<evidence type="ECO:0000305" key="2"/>
<comment type="function">
    <text evidence="1">This protein binds to the 23S rRNA, and is important in its secondary structure. It is located near the subunit interface in the base of the L7/L12 stalk, and near the tRNA binding site of the peptidyltransferase center.</text>
</comment>
<comment type="subunit">
    <text evidence="1">Part of the 50S ribosomal subunit.</text>
</comment>
<comment type="similarity">
    <text evidence="1">Belongs to the universal ribosomal protein uL6 family.</text>
</comment>
<sequence length="178" mass="19075">MSRIGKKPVVIPSGVTINVAAGNKVEVKGAKATLSKTFSTDVTFSVADNVATITPNNNSKNAVAQSGTARAILSNMVEGVSKGFERKLKIIGVGYRAKAQGNELNLTLGFSHPVVYKLPQGITAETPAPTEIILKGADKELLGKVASEVREYRKPEPYKGKGVRYEDEYVAKKEAKKK</sequence>